<name>CYTB_OPLFA</name>
<organism>
    <name type="scientific">Oplegnathus fasciatus</name>
    <name type="common">Barred knifejaw</name>
    <name type="synonym">Scaradon fasciatus</name>
    <dbReference type="NCBI Taxonomy" id="163134"/>
    <lineage>
        <taxon>Eukaryota</taxon>
        <taxon>Metazoa</taxon>
        <taxon>Chordata</taxon>
        <taxon>Craniata</taxon>
        <taxon>Vertebrata</taxon>
        <taxon>Euteleostomi</taxon>
        <taxon>Actinopterygii</taxon>
        <taxon>Neopterygii</taxon>
        <taxon>Teleostei</taxon>
        <taxon>Neoteleostei</taxon>
        <taxon>Acanthomorphata</taxon>
        <taxon>Eupercaria</taxon>
        <taxon>Centrarchiformes</taxon>
        <taxon>Terapontoidei</taxon>
        <taxon>Oplegnathidae</taxon>
        <taxon>Oplegnathus</taxon>
    </lineage>
</organism>
<sequence>MSMMCGGISAPLDADEDIQKMCDNVKPHAEEKAGKKYDVFTAKTYTTQIVSGTNYFIKIHVGGDDHVHLRVYKKLPCHGGGLELSGMQHSKSLQDPIAYF</sequence>
<feature type="chain" id="PRO_0000434648" description="Cystatin-B">
    <location>
        <begin position="1"/>
        <end position="100"/>
    </location>
</feature>
<feature type="domain" description="Cystatin" evidence="3">
    <location>
        <begin position="6"/>
        <end position="88"/>
    </location>
</feature>
<feature type="short sequence motif" description="Secondary area of contact" evidence="2">
    <location>
        <begin position="48"/>
        <end position="52"/>
    </location>
</feature>
<feature type="site" description="Reactive site" evidence="2">
    <location>
        <position position="6"/>
    </location>
</feature>
<protein>
    <recommendedName>
        <fullName evidence="2 7">Cystatin-B</fullName>
    </recommendedName>
    <alternativeName>
        <fullName evidence="2 5">RbCyt-B</fullName>
    </alternativeName>
    <alternativeName>
        <fullName evidence="1 2">Stefin-B</fullName>
    </alternativeName>
</protein>
<dbReference type="EMBL" id="JQ287496">
    <property type="protein sequence ID" value="AFP50145.1"/>
    <property type="molecule type" value="Genomic_DNA"/>
</dbReference>
<dbReference type="SMR" id="J7FQE8"/>
<dbReference type="GO" id="GO:0005737">
    <property type="term" value="C:cytoplasm"/>
    <property type="evidence" value="ECO:0000250"/>
    <property type="project" value="UniProtKB"/>
</dbReference>
<dbReference type="GO" id="GO:0005829">
    <property type="term" value="C:cytosol"/>
    <property type="evidence" value="ECO:0007669"/>
    <property type="project" value="TreeGrafter"/>
</dbReference>
<dbReference type="GO" id="GO:0004869">
    <property type="term" value="F:cysteine-type endopeptidase inhibitor activity"/>
    <property type="evidence" value="ECO:0000314"/>
    <property type="project" value="UniProtKB"/>
</dbReference>
<dbReference type="GO" id="GO:0071220">
    <property type="term" value="P:cellular response to bacterial lipoprotein"/>
    <property type="evidence" value="ECO:0000353"/>
    <property type="project" value="UniProtKB"/>
</dbReference>
<dbReference type="GO" id="GO:0002376">
    <property type="term" value="P:immune system process"/>
    <property type="evidence" value="ECO:0007669"/>
    <property type="project" value="UniProtKB-KW"/>
</dbReference>
<dbReference type="CDD" id="cd00042">
    <property type="entry name" value="CY"/>
    <property type="match status" value="1"/>
</dbReference>
<dbReference type="FunFam" id="3.10.450.10:FF:000001">
    <property type="entry name" value="Cystatin-A"/>
    <property type="match status" value="1"/>
</dbReference>
<dbReference type="Gene3D" id="3.10.450.10">
    <property type="match status" value="1"/>
</dbReference>
<dbReference type="InterPro" id="IPR000010">
    <property type="entry name" value="Cystatin_dom"/>
</dbReference>
<dbReference type="InterPro" id="IPR046350">
    <property type="entry name" value="Cystatin_sf"/>
</dbReference>
<dbReference type="InterPro" id="IPR018073">
    <property type="entry name" value="Prot_inh_cystat_CS"/>
</dbReference>
<dbReference type="InterPro" id="IPR001713">
    <property type="entry name" value="Prot_inh_stefin"/>
</dbReference>
<dbReference type="PANTHER" id="PTHR11414:SF21">
    <property type="entry name" value="CYSTATIN 14A, TANDEM DUPLICATE 1-RELATED"/>
    <property type="match status" value="1"/>
</dbReference>
<dbReference type="PANTHER" id="PTHR11414">
    <property type="entry name" value="CYSTATIN FAMILY MEMBER"/>
    <property type="match status" value="1"/>
</dbReference>
<dbReference type="Pfam" id="PF00031">
    <property type="entry name" value="Cystatin"/>
    <property type="match status" value="1"/>
</dbReference>
<dbReference type="PRINTS" id="PR00295">
    <property type="entry name" value="STEFINA"/>
</dbReference>
<dbReference type="SMART" id="SM00043">
    <property type="entry name" value="CY"/>
    <property type="match status" value="1"/>
</dbReference>
<dbReference type="SUPFAM" id="SSF54403">
    <property type="entry name" value="Cystatin/monellin"/>
    <property type="match status" value="1"/>
</dbReference>
<dbReference type="PROSITE" id="PS00287">
    <property type="entry name" value="CYSTATIN"/>
    <property type="match status" value="1"/>
</dbReference>
<keyword id="KW-0963">Cytoplasm</keyword>
<keyword id="KW-0391">Immunity</keyword>
<keyword id="KW-0646">Protease inhibitor</keyword>
<keyword id="KW-0789">Thiol protease inhibitor</keyword>
<comment type="function">
    <text evidence="4">Thiol protease inhibitor. Has papain inhibitory activity in vitro. May be involved in immune responses against invading Gram-negative bacteria.</text>
</comment>
<comment type="subcellular location">
    <subcellularLocation>
        <location evidence="2">Cytoplasm</location>
    </subcellularLocation>
</comment>
<comment type="tissue specificity">
    <text evidence="4">Widely expressed. Highly expressed in liver and to a lesser extent in spleen, gill, brain, intestine, kidney, head kidney and blood. Lowest level in muscle.</text>
</comment>
<comment type="induction">
    <text evidence="4">By bacterial infection. E.tarda bacteria causes significant up-regulation in head kidney between 12 hours and 24 hours post-infection and in spleen between 24 hours and 48 hours post-infection.</text>
</comment>
<comment type="similarity">
    <text evidence="6">Belongs to the cystatin family.</text>
</comment>
<reference key="1">
    <citation type="journal article" date="2012" name="Comp. Biochem. Physiol.">
        <title>Cystatin B homolog from rock bream Oplegnathus fasciatus: Genomic characterization, transcriptional profiling and protease-inhibitory activity of recombinant protein.</title>
        <authorList>
            <person name="Premachandra H.K."/>
            <person name="Whang I."/>
            <person name="Lee Y.D."/>
            <person name="Lee S."/>
            <person name="De Zoysa M."/>
            <person name="Oh M.J."/>
            <person name="Jung S.J."/>
            <person name="Lim B.S."/>
            <person name="Noh J.K."/>
            <person name="Park H.C."/>
            <person name="Lee J."/>
        </authorList>
    </citation>
    <scope>NUCLEOTIDE SEQUENCE [GENOMIC DNA]</scope>
    <scope>FUNCTION</scope>
    <scope>TISSUE SPECIFICITY</scope>
    <scope>INDUCTION</scope>
    <scope>PHYLOGENETIC ANALYSIS</scope>
    <source>
        <tissue evidence="5">Blood</tissue>
    </source>
</reference>
<accession>J7FQE8</accession>
<evidence type="ECO:0000250" key="1">
    <source>
        <dbReference type="UniProtKB" id="B2Z449"/>
    </source>
</evidence>
<evidence type="ECO:0000250" key="2">
    <source>
        <dbReference type="UniProtKB" id="P04080"/>
    </source>
</evidence>
<evidence type="ECO:0000255" key="3"/>
<evidence type="ECO:0000269" key="4">
    <source>
    </source>
</evidence>
<evidence type="ECO:0000303" key="5">
    <source>
    </source>
</evidence>
<evidence type="ECO:0000305" key="6"/>
<evidence type="ECO:0000312" key="7">
    <source>
        <dbReference type="EMBL" id="AFP50145.1"/>
    </source>
</evidence>
<proteinExistence type="evidence at transcript level"/>